<keyword id="KW-0963">Cytoplasm</keyword>
<keyword id="KW-0274">FAD</keyword>
<keyword id="KW-0285">Flavoprotein</keyword>
<keyword id="KW-0520">NAD</keyword>
<keyword id="KW-0819">tRNA processing</keyword>
<evidence type="ECO:0000255" key="1">
    <source>
        <dbReference type="HAMAP-Rule" id="MF_00129"/>
    </source>
</evidence>
<feature type="chain" id="PRO_1000016655" description="tRNA uridine 5-carboxymethylaminomethyl modification enzyme MnmG">
    <location>
        <begin position="1"/>
        <end position="646"/>
    </location>
</feature>
<feature type="binding site" evidence="1">
    <location>
        <begin position="13"/>
        <end position="18"/>
    </location>
    <ligand>
        <name>FAD</name>
        <dbReference type="ChEBI" id="CHEBI:57692"/>
    </ligand>
</feature>
<feature type="binding site" evidence="1">
    <location>
        <position position="125"/>
    </location>
    <ligand>
        <name>FAD</name>
        <dbReference type="ChEBI" id="CHEBI:57692"/>
    </ligand>
</feature>
<feature type="binding site" evidence="1">
    <location>
        <position position="180"/>
    </location>
    <ligand>
        <name>FAD</name>
        <dbReference type="ChEBI" id="CHEBI:57692"/>
    </ligand>
</feature>
<feature type="binding site" evidence="1">
    <location>
        <begin position="274"/>
        <end position="288"/>
    </location>
    <ligand>
        <name>NAD(+)</name>
        <dbReference type="ChEBI" id="CHEBI:57540"/>
    </ligand>
</feature>
<feature type="binding site" evidence="1">
    <location>
        <position position="371"/>
    </location>
    <ligand>
        <name>FAD</name>
        <dbReference type="ChEBI" id="CHEBI:57692"/>
    </ligand>
</feature>
<reference key="1">
    <citation type="journal article" date="2010" name="PLoS ONE">
        <title>The complete multipartite genome sequence of Cupriavidus necator JMP134, a versatile pollutant degrader.</title>
        <authorList>
            <person name="Lykidis A."/>
            <person name="Perez-Pantoja D."/>
            <person name="Ledger T."/>
            <person name="Mavromatis K."/>
            <person name="Anderson I.J."/>
            <person name="Ivanova N.N."/>
            <person name="Hooper S.D."/>
            <person name="Lapidus A."/>
            <person name="Lucas S."/>
            <person name="Gonzalez B."/>
            <person name="Kyrpides N.C."/>
        </authorList>
    </citation>
    <scope>NUCLEOTIDE SEQUENCE [LARGE SCALE GENOMIC DNA]</scope>
    <source>
        <strain>JMP134 / LMG 1197</strain>
    </source>
</reference>
<sequence>MLYPKEFDVIVVGGGHAGTEAALAAARMGCQTLLLTHNIETLGQMSCNPSIGGIGKGHLVKEVDAMGGAMAAATDEAGIQFRILNSSKGPAVRATRAQADRVLYRKAIRTRLENQPNLMLFQQAVDDLLVEGDRVVGAVTQVGIAFRARAVVLTAGTFLDGKIHVGLDNYTGGRAGDPASVSLSARLKELKLPQGRLKTGTPPRIDGRTIDFSVMEEQPGDLDPVPVFSFLGRPEQHPQQLPCWISHTNSRTHDIIRGGLDRSPMYTGVIEGVGPRYCPSIEDKIHRFASKDSHQIFLEPEGLTTNEFYPNGISTSLPFDVQLELVHSIRGLENAHILRPGYAIEYDYFDPRALKASLESKAISGLFFAGQINGTTGYEEAAAQGLLAGINAGCYVRERDAWTPRRDQAYLGVLVDDLITRGVTEPYRMFTSRAEFRLSLREDNADMRLTEVGRELGVVDDVRWDAFNRKRDAVSRETERLKSTWVNPTILPAEDAVPLLGKPIEREYSLADLLRRPEVVYNDLMALQGGRHAPEVPLDGDPLLMDQIREQIEIGVKYHGYIARQAAEVDKLEANESTRLPEGLDYTEVRGLGFEVSQKLNQHRPETLGQASRISGVTPAAISLLLVHLKKKGLGRTRSGNSQEAA</sequence>
<proteinExistence type="inferred from homology"/>
<name>MNMG_CUPPJ</name>
<organism>
    <name type="scientific">Cupriavidus pinatubonensis (strain JMP 134 / LMG 1197)</name>
    <name type="common">Cupriavidus necator (strain JMP 134)</name>
    <dbReference type="NCBI Taxonomy" id="264198"/>
    <lineage>
        <taxon>Bacteria</taxon>
        <taxon>Pseudomonadati</taxon>
        <taxon>Pseudomonadota</taxon>
        <taxon>Betaproteobacteria</taxon>
        <taxon>Burkholderiales</taxon>
        <taxon>Burkholderiaceae</taxon>
        <taxon>Cupriavidus</taxon>
    </lineage>
</organism>
<accession>Q46VW9</accession>
<protein>
    <recommendedName>
        <fullName evidence="1">tRNA uridine 5-carboxymethylaminomethyl modification enzyme MnmG</fullName>
    </recommendedName>
    <alternativeName>
        <fullName evidence="1">Glucose-inhibited division protein A</fullName>
    </alternativeName>
</protein>
<gene>
    <name evidence="1" type="primary">mnmG</name>
    <name evidence="1" type="synonym">gidA</name>
    <name type="ordered locus">Reut_A3357</name>
</gene>
<comment type="function">
    <text evidence="1">NAD-binding protein involved in the addition of a carboxymethylaminomethyl (cmnm) group at the wobble position (U34) of certain tRNAs, forming tRNA-cmnm(5)s(2)U34.</text>
</comment>
<comment type="cofactor">
    <cofactor evidence="1">
        <name>FAD</name>
        <dbReference type="ChEBI" id="CHEBI:57692"/>
    </cofactor>
</comment>
<comment type="subunit">
    <text evidence="1">Homodimer. Heterotetramer of two MnmE and two MnmG subunits.</text>
</comment>
<comment type="subcellular location">
    <subcellularLocation>
        <location evidence="1">Cytoplasm</location>
    </subcellularLocation>
</comment>
<comment type="similarity">
    <text evidence="1">Belongs to the MnmG family.</text>
</comment>
<dbReference type="EMBL" id="CP000090">
    <property type="protein sequence ID" value="AAZ62715.1"/>
    <property type="molecule type" value="Genomic_DNA"/>
</dbReference>
<dbReference type="SMR" id="Q46VW9"/>
<dbReference type="STRING" id="264198.Reut_A3357"/>
<dbReference type="KEGG" id="reu:Reut_A3357"/>
<dbReference type="eggNOG" id="COG0445">
    <property type="taxonomic scope" value="Bacteria"/>
</dbReference>
<dbReference type="HOGENOM" id="CLU_007831_2_2_4"/>
<dbReference type="OrthoDB" id="9815560at2"/>
<dbReference type="GO" id="GO:0005829">
    <property type="term" value="C:cytosol"/>
    <property type="evidence" value="ECO:0007669"/>
    <property type="project" value="TreeGrafter"/>
</dbReference>
<dbReference type="GO" id="GO:0050660">
    <property type="term" value="F:flavin adenine dinucleotide binding"/>
    <property type="evidence" value="ECO:0007669"/>
    <property type="project" value="UniProtKB-UniRule"/>
</dbReference>
<dbReference type="GO" id="GO:0030488">
    <property type="term" value="P:tRNA methylation"/>
    <property type="evidence" value="ECO:0007669"/>
    <property type="project" value="TreeGrafter"/>
</dbReference>
<dbReference type="GO" id="GO:0002098">
    <property type="term" value="P:tRNA wobble uridine modification"/>
    <property type="evidence" value="ECO:0007669"/>
    <property type="project" value="InterPro"/>
</dbReference>
<dbReference type="FunFam" id="1.10.10.1800:FF:000001">
    <property type="entry name" value="tRNA uridine 5-carboxymethylaminomethyl modification enzyme MnmG"/>
    <property type="match status" value="1"/>
</dbReference>
<dbReference type="FunFam" id="1.10.150.570:FF:000001">
    <property type="entry name" value="tRNA uridine 5-carboxymethylaminomethyl modification enzyme MnmG"/>
    <property type="match status" value="1"/>
</dbReference>
<dbReference type="FunFam" id="3.50.50.60:FF:000002">
    <property type="entry name" value="tRNA uridine 5-carboxymethylaminomethyl modification enzyme MnmG"/>
    <property type="match status" value="1"/>
</dbReference>
<dbReference type="FunFam" id="3.50.50.60:FF:000010">
    <property type="entry name" value="tRNA uridine 5-carboxymethylaminomethyl modification enzyme MnmG"/>
    <property type="match status" value="1"/>
</dbReference>
<dbReference type="Gene3D" id="3.50.50.60">
    <property type="entry name" value="FAD/NAD(P)-binding domain"/>
    <property type="match status" value="2"/>
</dbReference>
<dbReference type="Gene3D" id="1.10.150.570">
    <property type="entry name" value="GidA associated domain, C-terminal subdomain"/>
    <property type="match status" value="1"/>
</dbReference>
<dbReference type="Gene3D" id="1.10.10.1800">
    <property type="entry name" value="tRNA uridine 5-carboxymethylaminomethyl modification enzyme MnmG/GidA"/>
    <property type="match status" value="1"/>
</dbReference>
<dbReference type="HAMAP" id="MF_00129">
    <property type="entry name" value="MnmG_GidA"/>
    <property type="match status" value="1"/>
</dbReference>
<dbReference type="InterPro" id="IPR036188">
    <property type="entry name" value="FAD/NAD-bd_sf"/>
</dbReference>
<dbReference type="InterPro" id="IPR049312">
    <property type="entry name" value="GIDA_C_N"/>
</dbReference>
<dbReference type="InterPro" id="IPR004416">
    <property type="entry name" value="MnmG"/>
</dbReference>
<dbReference type="InterPro" id="IPR002218">
    <property type="entry name" value="MnmG-rel"/>
</dbReference>
<dbReference type="InterPro" id="IPR020595">
    <property type="entry name" value="MnmG-rel_CS"/>
</dbReference>
<dbReference type="InterPro" id="IPR026904">
    <property type="entry name" value="MnmG_C"/>
</dbReference>
<dbReference type="InterPro" id="IPR047001">
    <property type="entry name" value="MnmG_C_subdom"/>
</dbReference>
<dbReference type="InterPro" id="IPR044920">
    <property type="entry name" value="MnmG_C_subdom_sf"/>
</dbReference>
<dbReference type="InterPro" id="IPR040131">
    <property type="entry name" value="MnmG_N"/>
</dbReference>
<dbReference type="NCBIfam" id="TIGR00136">
    <property type="entry name" value="mnmG_gidA"/>
    <property type="match status" value="1"/>
</dbReference>
<dbReference type="PANTHER" id="PTHR11806">
    <property type="entry name" value="GLUCOSE INHIBITED DIVISION PROTEIN A"/>
    <property type="match status" value="1"/>
</dbReference>
<dbReference type="PANTHER" id="PTHR11806:SF0">
    <property type="entry name" value="PROTEIN MTO1 HOMOLOG, MITOCHONDRIAL"/>
    <property type="match status" value="1"/>
</dbReference>
<dbReference type="Pfam" id="PF01134">
    <property type="entry name" value="GIDA"/>
    <property type="match status" value="1"/>
</dbReference>
<dbReference type="Pfam" id="PF21680">
    <property type="entry name" value="GIDA_C_1st"/>
    <property type="match status" value="1"/>
</dbReference>
<dbReference type="Pfam" id="PF13932">
    <property type="entry name" value="SAM_GIDA_C"/>
    <property type="match status" value="1"/>
</dbReference>
<dbReference type="SMART" id="SM01228">
    <property type="entry name" value="GIDA_assoc_3"/>
    <property type="match status" value="1"/>
</dbReference>
<dbReference type="SUPFAM" id="SSF51905">
    <property type="entry name" value="FAD/NAD(P)-binding domain"/>
    <property type="match status" value="1"/>
</dbReference>
<dbReference type="PROSITE" id="PS01280">
    <property type="entry name" value="GIDA_1"/>
    <property type="match status" value="1"/>
</dbReference>
<dbReference type="PROSITE" id="PS01281">
    <property type="entry name" value="GIDA_2"/>
    <property type="match status" value="1"/>
</dbReference>